<protein>
    <recommendedName>
        <fullName evidence="1">Shikimate dehydrogenase (NADP(+))</fullName>
        <shortName evidence="1">SDH</shortName>
        <ecNumber evidence="1">1.1.1.25</ecNumber>
    </recommendedName>
</protein>
<name>AROE_SPHAL</name>
<dbReference type="EC" id="1.1.1.25" evidence="1"/>
<dbReference type="EMBL" id="CP000356">
    <property type="protein sequence ID" value="ABF54545.1"/>
    <property type="molecule type" value="Genomic_DNA"/>
</dbReference>
<dbReference type="RefSeq" id="WP_011543109.1">
    <property type="nucleotide sequence ID" value="NC_008048.1"/>
</dbReference>
<dbReference type="SMR" id="Q1GP77"/>
<dbReference type="STRING" id="317655.Sala_2840"/>
<dbReference type="KEGG" id="sal:Sala_2840"/>
<dbReference type="eggNOG" id="COG0169">
    <property type="taxonomic scope" value="Bacteria"/>
</dbReference>
<dbReference type="HOGENOM" id="CLU_044063_2_0_5"/>
<dbReference type="OrthoDB" id="9792692at2"/>
<dbReference type="UniPathway" id="UPA00053">
    <property type="reaction ID" value="UER00087"/>
</dbReference>
<dbReference type="Proteomes" id="UP000006578">
    <property type="component" value="Chromosome"/>
</dbReference>
<dbReference type="GO" id="GO:0005829">
    <property type="term" value="C:cytosol"/>
    <property type="evidence" value="ECO:0007669"/>
    <property type="project" value="TreeGrafter"/>
</dbReference>
<dbReference type="GO" id="GO:0050661">
    <property type="term" value="F:NADP binding"/>
    <property type="evidence" value="ECO:0007669"/>
    <property type="project" value="InterPro"/>
</dbReference>
<dbReference type="GO" id="GO:0004764">
    <property type="term" value="F:shikimate 3-dehydrogenase (NADP+) activity"/>
    <property type="evidence" value="ECO:0007669"/>
    <property type="project" value="UniProtKB-UniRule"/>
</dbReference>
<dbReference type="GO" id="GO:0008652">
    <property type="term" value="P:amino acid biosynthetic process"/>
    <property type="evidence" value="ECO:0007669"/>
    <property type="project" value="UniProtKB-KW"/>
</dbReference>
<dbReference type="GO" id="GO:0009073">
    <property type="term" value="P:aromatic amino acid family biosynthetic process"/>
    <property type="evidence" value="ECO:0007669"/>
    <property type="project" value="UniProtKB-KW"/>
</dbReference>
<dbReference type="GO" id="GO:0009423">
    <property type="term" value="P:chorismate biosynthetic process"/>
    <property type="evidence" value="ECO:0007669"/>
    <property type="project" value="UniProtKB-UniRule"/>
</dbReference>
<dbReference type="GO" id="GO:0019632">
    <property type="term" value="P:shikimate metabolic process"/>
    <property type="evidence" value="ECO:0007669"/>
    <property type="project" value="InterPro"/>
</dbReference>
<dbReference type="CDD" id="cd01065">
    <property type="entry name" value="NAD_bind_Shikimate_DH"/>
    <property type="match status" value="1"/>
</dbReference>
<dbReference type="Gene3D" id="3.40.50.10860">
    <property type="entry name" value="Leucine Dehydrogenase, chain A, domain 1"/>
    <property type="match status" value="1"/>
</dbReference>
<dbReference type="Gene3D" id="3.40.50.720">
    <property type="entry name" value="NAD(P)-binding Rossmann-like Domain"/>
    <property type="match status" value="1"/>
</dbReference>
<dbReference type="HAMAP" id="MF_00222">
    <property type="entry name" value="Shikimate_DH_AroE"/>
    <property type="match status" value="1"/>
</dbReference>
<dbReference type="InterPro" id="IPR046346">
    <property type="entry name" value="Aminoacid_DH-like_N_sf"/>
</dbReference>
<dbReference type="InterPro" id="IPR036291">
    <property type="entry name" value="NAD(P)-bd_dom_sf"/>
</dbReference>
<dbReference type="InterPro" id="IPR041121">
    <property type="entry name" value="SDH_C"/>
</dbReference>
<dbReference type="InterPro" id="IPR011342">
    <property type="entry name" value="Shikimate_DH"/>
</dbReference>
<dbReference type="InterPro" id="IPR013708">
    <property type="entry name" value="Shikimate_DH-bd_N"/>
</dbReference>
<dbReference type="InterPro" id="IPR022893">
    <property type="entry name" value="Shikimate_DH_fam"/>
</dbReference>
<dbReference type="NCBIfam" id="TIGR00507">
    <property type="entry name" value="aroE"/>
    <property type="match status" value="1"/>
</dbReference>
<dbReference type="PANTHER" id="PTHR21089:SF1">
    <property type="entry name" value="BIFUNCTIONAL 3-DEHYDROQUINATE DEHYDRATASE_SHIKIMATE DEHYDROGENASE, CHLOROPLASTIC"/>
    <property type="match status" value="1"/>
</dbReference>
<dbReference type="PANTHER" id="PTHR21089">
    <property type="entry name" value="SHIKIMATE DEHYDROGENASE"/>
    <property type="match status" value="1"/>
</dbReference>
<dbReference type="Pfam" id="PF18317">
    <property type="entry name" value="SDH_C"/>
    <property type="match status" value="1"/>
</dbReference>
<dbReference type="Pfam" id="PF08501">
    <property type="entry name" value="Shikimate_dh_N"/>
    <property type="match status" value="1"/>
</dbReference>
<dbReference type="SUPFAM" id="SSF53223">
    <property type="entry name" value="Aminoacid dehydrogenase-like, N-terminal domain"/>
    <property type="match status" value="1"/>
</dbReference>
<dbReference type="SUPFAM" id="SSF51735">
    <property type="entry name" value="NAD(P)-binding Rossmann-fold domains"/>
    <property type="match status" value="1"/>
</dbReference>
<accession>Q1GP77</accession>
<evidence type="ECO:0000255" key="1">
    <source>
        <dbReference type="HAMAP-Rule" id="MF_00222"/>
    </source>
</evidence>
<feature type="chain" id="PRO_1000021337" description="Shikimate dehydrogenase (NADP(+))">
    <location>
        <begin position="1"/>
        <end position="274"/>
    </location>
</feature>
<feature type="active site" description="Proton acceptor" evidence="1">
    <location>
        <position position="72"/>
    </location>
</feature>
<feature type="binding site" evidence="1">
    <location>
        <begin position="20"/>
        <end position="22"/>
    </location>
    <ligand>
        <name>shikimate</name>
        <dbReference type="ChEBI" id="CHEBI:36208"/>
    </ligand>
</feature>
<feature type="binding site" evidence="1">
    <location>
        <position position="68"/>
    </location>
    <ligand>
        <name>shikimate</name>
        <dbReference type="ChEBI" id="CHEBI:36208"/>
    </ligand>
</feature>
<feature type="binding site" evidence="1">
    <location>
        <position position="84"/>
    </location>
    <ligand>
        <name>NADP(+)</name>
        <dbReference type="ChEBI" id="CHEBI:58349"/>
    </ligand>
</feature>
<feature type="binding site" evidence="1">
    <location>
        <position position="93"/>
    </location>
    <ligand>
        <name>shikimate</name>
        <dbReference type="ChEBI" id="CHEBI:36208"/>
    </ligand>
</feature>
<feature type="binding site" evidence="1">
    <location>
        <position position="109"/>
    </location>
    <ligand>
        <name>shikimate</name>
        <dbReference type="ChEBI" id="CHEBI:36208"/>
    </ligand>
</feature>
<feature type="binding site" evidence="1">
    <location>
        <begin position="131"/>
        <end position="135"/>
    </location>
    <ligand>
        <name>NADP(+)</name>
        <dbReference type="ChEBI" id="CHEBI:58349"/>
    </ligand>
</feature>
<feature type="binding site" evidence="1">
    <location>
        <position position="217"/>
    </location>
    <ligand>
        <name>NADP(+)</name>
        <dbReference type="ChEBI" id="CHEBI:58349"/>
    </ligand>
</feature>
<feature type="binding site" evidence="1">
    <location>
        <position position="219"/>
    </location>
    <ligand>
        <name>shikimate</name>
        <dbReference type="ChEBI" id="CHEBI:36208"/>
    </ligand>
</feature>
<feature type="binding site" evidence="1">
    <location>
        <position position="240"/>
    </location>
    <ligand>
        <name>NADP(+)</name>
        <dbReference type="ChEBI" id="CHEBI:58349"/>
    </ligand>
</feature>
<keyword id="KW-0028">Amino-acid biosynthesis</keyword>
<keyword id="KW-0057">Aromatic amino acid biosynthesis</keyword>
<keyword id="KW-0521">NADP</keyword>
<keyword id="KW-0560">Oxidoreductase</keyword>
<keyword id="KW-1185">Reference proteome</keyword>
<gene>
    <name evidence="1" type="primary">aroE</name>
    <name type="ordered locus">Sala_2840</name>
</gene>
<organism>
    <name type="scientific">Sphingopyxis alaskensis (strain DSM 13593 / LMG 18877 / RB2256)</name>
    <name type="common">Sphingomonas alaskensis</name>
    <dbReference type="NCBI Taxonomy" id="317655"/>
    <lineage>
        <taxon>Bacteria</taxon>
        <taxon>Pseudomonadati</taxon>
        <taxon>Pseudomonadota</taxon>
        <taxon>Alphaproteobacteria</taxon>
        <taxon>Sphingomonadales</taxon>
        <taxon>Sphingomonadaceae</taxon>
        <taxon>Sphingopyxis</taxon>
    </lineage>
</organism>
<comment type="function">
    <text evidence="1">Involved in the biosynthesis of the chorismate, which leads to the biosynthesis of aromatic amino acids. Catalyzes the reversible NADPH linked reduction of 3-dehydroshikimate (DHSA) to yield shikimate (SA).</text>
</comment>
<comment type="catalytic activity">
    <reaction evidence="1">
        <text>shikimate + NADP(+) = 3-dehydroshikimate + NADPH + H(+)</text>
        <dbReference type="Rhea" id="RHEA:17737"/>
        <dbReference type="ChEBI" id="CHEBI:15378"/>
        <dbReference type="ChEBI" id="CHEBI:16630"/>
        <dbReference type="ChEBI" id="CHEBI:36208"/>
        <dbReference type="ChEBI" id="CHEBI:57783"/>
        <dbReference type="ChEBI" id="CHEBI:58349"/>
        <dbReference type="EC" id="1.1.1.25"/>
    </reaction>
</comment>
<comment type="pathway">
    <text evidence="1">Metabolic intermediate biosynthesis; chorismate biosynthesis; chorismate from D-erythrose 4-phosphate and phosphoenolpyruvate: step 4/7.</text>
</comment>
<comment type="subunit">
    <text evidence="1">Homodimer.</text>
</comment>
<comment type="similarity">
    <text evidence="1">Belongs to the shikimate dehydrogenase family.</text>
</comment>
<sequence length="274" mass="28583">MSHPYASPFAEVIGDPIAQSKSPLIHGFWLDALGMEGDYRRAHVKADALAAYIAERRADPGWRGCNVTMPHKAAVMDLVDDPGDIRGTIGAMNTIVRQPDGSLIGTNTDAAGFYSPLAELDLEGAPIAVVGAGGAARAVLFALARAKVGKVAILNRSPLKAMGLLATFGLKGDVVALDAALPPVRLLVNASSLGMAGQPPLDLDLSPLPDDAIVYDLVYSPLRTGLLKAAEARGLDTVDGLDMLIGQAALAFELFFGAPPPEGRDDELRALLVA</sequence>
<reference key="1">
    <citation type="journal article" date="2009" name="Proc. Natl. Acad. Sci. U.S.A.">
        <title>The genomic basis of trophic strategy in marine bacteria.</title>
        <authorList>
            <person name="Lauro F.M."/>
            <person name="McDougald D."/>
            <person name="Thomas T."/>
            <person name="Williams T.J."/>
            <person name="Egan S."/>
            <person name="Rice S."/>
            <person name="DeMaere M.Z."/>
            <person name="Ting L."/>
            <person name="Ertan H."/>
            <person name="Johnson J."/>
            <person name="Ferriera S."/>
            <person name="Lapidus A."/>
            <person name="Anderson I."/>
            <person name="Kyrpides N."/>
            <person name="Munk A.C."/>
            <person name="Detter C."/>
            <person name="Han C.S."/>
            <person name="Brown M.V."/>
            <person name="Robb F.T."/>
            <person name="Kjelleberg S."/>
            <person name="Cavicchioli R."/>
        </authorList>
    </citation>
    <scope>NUCLEOTIDE SEQUENCE [LARGE SCALE GENOMIC DNA]</scope>
    <source>
        <strain>DSM 13593 / LMG 18877 / RB2256</strain>
    </source>
</reference>
<proteinExistence type="inferred from homology"/>